<reference key="1">
    <citation type="submission" date="2008-04" db="EMBL/GenBank/DDBJ databases">
        <title>Complete sequence of chromosome of Methylobacterium populi BJ001.</title>
        <authorList>
            <consortium name="US DOE Joint Genome Institute"/>
            <person name="Copeland A."/>
            <person name="Lucas S."/>
            <person name="Lapidus A."/>
            <person name="Glavina del Rio T."/>
            <person name="Dalin E."/>
            <person name="Tice H."/>
            <person name="Bruce D."/>
            <person name="Goodwin L."/>
            <person name="Pitluck S."/>
            <person name="Chertkov O."/>
            <person name="Brettin T."/>
            <person name="Detter J.C."/>
            <person name="Han C."/>
            <person name="Kuske C.R."/>
            <person name="Schmutz J."/>
            <person name="Larimer F."/>
            <person name="Land M."/>
            <person name="Hauser L."/>
            <person name="Kyrpides N."/>
            <person name="Mikhailova N."/>
            <person name="Marx C."/>
            <person name="Richardson P."/>
        </authorList>
    </citation>
    <scope>NUCLEOTIDE SEQUENCE [LARGE SCALE GENOMIC DNA]</scope>
    <source>
        <strain>ATCC BAA-705 / NCIMB 13946 / BJ001</strain>
    </source>
</reference>
<organism>
    <name type="scientific">Methylorubrum populi (strain ATCC BAA-705 / NCIMB 13946 / BJ001)</name>
    <name type="common">Methylobacterium populi</name>
    <dbReference type="NCBI Taxonomy" id="441620"/>
    <lineage>
        <taxon>Bacteria</taxon>
        <taxon>Pseudomonadati</taxon>
        <taxon>Pseudomonadota</taxon>
        <taxon>Alphaproteobacteria</taxon>
        <taxon>Hyphomicrobiales</taxon>
        <taxon>Methylobacteriaceae</taxon>
        <taxon>Methylorubrum</taxon>
    </lineage>
</organism>
<sequence>MSDPVFIVPKAGLTLGAVAEACGVPLPEGADPSQPVTGAAPLETAGPSDLAYMDNARYGDALGTTRALACLVSPRFAPRVPAGTIALVTRDPYRAYAGLLARLYEEAMRPGSLFAASGVSPGAHVHPQARLEDGVRVDPGAVVGPGAEIGSGTVLGPNAVIGPNVRIGRDCSIGSGATLTHALVGNRVIIHPGARIGQDGFGFAMGAGGHIKVPQVGRVIIQDDVEIGANTTIDRGASRDTVVGEGTKIDNLVQIAHNVVIGRHCVIVSGVGISGSTTLEDYVVLGGQVGVVGHLRIGMGSQIAGSSNVNRDVPPGSRWGGTPAKPVRTWFREMTTLARLAERGGKDDGEG</sequence>
<gene>
    <name evidence="1" type="primary">lpxD</name>
    <name type="ordered locus">Mpop_2040</name>
</gene>
<accession>B1ZLC2</accession>
<protein>
    <recommendedName>
        <fullName evidence="1">UDP-3-O-acylglucosamine N-acyltransferase</fullName>
        <ecNumber evidence="1">2.3.1.191</ecNumber>
    </recommendedName>
</protein>
<keyword id="KW-0012">Acyltransferase</keyword>
<keyword id="KW-0441">Lipid A biosynthesis</keyword>
<keyword id="KW-0444">Lipid biosynthesis</keyword>
<keyword id="KW-0443">Lipid metabolism</keyword>
<keyword id="KW-0677">Repeat</keyword>
<keyword id="KW-0808">Transferase</keyword>
<comment type="function">
    <text evidence="1">Catalyzes the N-acylation of UDP-3-O-acylglucosamine using 3-hydroxyacyl-ACP as the acyl donor. Is involved in the biosynthesis of lipid A, a phosphorylated glycolipid that anchors the lipopolysaccharide to the outer membrane of the cell.</text>
</comment>
<comment type="catalytic activity">
    <reaction evidence="1">
        <text>a UDP-3-O-[(3R)-3-hydroxyacyl]-alpha-D-glucosamine + a (3R)-hydroxyacyl-[ACP] = a UDP-2-N,3-O-bis[(3R)-3-hydroxyacyl]-alpha-D-glucosamine + holo-[ACP] + H(+)</text>
        <dbReference type="Rhea" id="RHEA:53836"/>
        <dbReference type="Rhea" id="RHEA-COMP:9685"/>
        <dbReference type="Rhea" id="RHEA-COMP:9945"/>
        <dbReference type="ChEBI" id="CHEBI:15378"/>
        <dbReference type="ChEBI" id="CHEBI:64479"/>
        <dbReference type="ChEBI" id="CHEBI:78827"/>
        <dbReference type="ChEBI" id="CHEBI:137740"/>
        <dbReference type="ChEBI" id="CHEBI:137748"/>
        <dbReference type="EC" id="2.3.1.191"/>
    </reaction>
</comment>
<comment type="pathway">
    <text evidence="1">Bacterial outer membrane biogenesis; LPS lipid A biosynthesis.</text>
</comment>
<comment type="subunit">
    <text evidence="1">Homotrimer.</text>
</comment>
<comment type="similarity">
    <text evidence="1">Belongs to the transferase hexapeptide repeat family. LpxD subfamily.</text>
</comment>
<name>LPXD_METPB</name>
<proteinExistence type="inferred from homology"/>
<feature type="chain" id="PRO_1000127685" description="UDP-3-O-acylglucosamine N-acyltransferase">
    <location>
        <begin position="1"/>
        <end position="351"/>
    </location>
</feature>
<feature type="active site" description="Proton acceptor" evidence="1">
    <location>
        <position position="257"/>
    </location>
</feature>
<dbReference type="EC" id="2.3.1.191" evidence="1"/>
<dbReference type="EMBL" id="CP001029">
    <property type="protein sequence ID" value="ACB80203.1"/>
    <property type="molecule type" value="Genomic_DNA"/>
</dbReference>
<dbReference type="RefSeq" id="WP_012453947.1">
    <property type="nucleotide sequence ID" value="NC_010725.1"/>
</dbReference>
<dbReference type="SMR" id="B1ZLC2"/>
<dbReference type="STRING" id="441620.Mpop_2040"/>
<dbReference type="KEGG" id="mpo:Mpop_2040"/>
<dbReference type="eggNOG" id="COG1044">
    <property type="taxonomic scope" value="Bacteria"/>
</dbReference>
<dbReference type="HOGENOM" id="CLU_049865_0_2_5"/>
<dbReference type="OrthoDB" id="9784739at2"/>
<dbReference type="UniPathway" id="UPA00973"/>
<dbReference type="Proteomes" id="UP000007136">
    <property type="component" value="Chromosome"/>
</dbReference>
<dbReference type="GO" id="GO:0016020">
    <property type="term" value="C:membrane"/>
    <property type="evidence" value="ECO:0007669"/>
    <property type="project" value="GOC"/>
</dbReference>
<dbReference type="GO" id="GO:0016410">
    <property type="term" value="F:N-acyltransferase activity"/>
    <property type="evidence" value="ECO:0007669"/>
    <property type="project" value="InterPro"/>
</dbReference>
<dbReference type="GO" id="GO:0009245">
    <property type="term" value="P:lipid A biosynthetic process"/>
    <property type="evidence" value="ECO:0007669"/>
    <property type="project" value="UniProtKB-UniRule"/>
</dbReference>
<dbReference type="CDD" id="cd03352">
    <property type="entry name" value="LbH_LpxD"/>
    <property type="match status" value="1"/>
</dbReference>
<dbReference type="Gene3D" id="2.160.10.10">
    <property type="entry name" value="Hexapeptide repeat proteins"/>
    <property type="match status" value="1"/>
</dbReference>
<dbReference type="Gene3D" id="3.40.1390.10">
    <property type="entry name" value="MurE/MurF, N-terminal domain"/>
    <property type="match status" value="1"/>
</dbReference>
<dbReference type="HAMAP" id="MF_00523">
    <property type="entry name" value="LpxD"/>
    <property type="match status" value="1"/>
</dbReference>
<dbReference type="InterPro" id="IPR001451">
    <property type="entry name" value="Hexapep"/>
</dbReference>
<dbReference type="InterPro" id="IPR018357">
    <property type="entry name" value="Hexapep_transf_CS"/>
</dbReference>
<dbReference type="InterPro" id="IPR007691">
    <property type="entry name" value="LpxD"/>
</dbReference>
<dbReference type="InterPro" id="IPR011004">
    <property type="entry name" value="Trimer_LpxA-like_sf"/>
</dbReference>
<dbReference type="InterPro" id="IPR020573">
    <property type="entry name" value="UDP_GlcNAc_AcTrfase_non-rep"/>
</dbReference>
<dbReference type="NCBIfam" id="TIGR01853">
    <property type="entry name" value="lipid_A_lpxD"/>
    <property type="match status" value="1"/>
</dbReference>
<dbReference type="NCBIfam" id="NF002060">
    <property type="entry name" value="PRK00892.1"/>
    <property type="match status" value="1"/>
</dbReference>
<dbReference type="PANTHER" id="PTHR43378">
    <property type="entry name" value="UDP-3-O-ACYLGLUCOSAMINE N-ACYLTRANSFERASE"/>
    <property type="match status" value="1"/>
</dbReference>
<dbReference type="PANTHER" id="PTHR43378:SF2">
    <property type="entry name" value="UDP-3-O-ACYLGLUCOSAMINE N-ACYLTRANSFERASE 1, MITOCHONDRIAL-RELATED"/>
    <property type="match status" value="1"/>
</dbReference>
<dbReference type="Pfam" id="PF00132">
    <property type="entry name" value="Hexapep"/>
    <property type="match status" value="2"/>
</dbReference>
<dbReference type="Pfam" id="PF04613">
    <property type="entry name" value="LpxD"/>
    <property type="match status" value="1"/>
</dbReference>
<dbReference type="SUPFAM" id="SSF51161">
    <property type="entry name" value="Trimeric LpxA-like enzymes"/>
    <property type="match status" value="1"/>
</dbReference>
<dbReference type="PROSITE" id="PS00101">
    <property type="entry name" value="HEXAPEP_TRANSFERASES"/>
    <property type="match status" value="2"/>
</dbReference>
<evidence type="ECO:0000255" key="1">
    <source>
        <dbReference type="HAMAP-Rule" id="MF_00523"/>
    </source>
</evidence>